<reference key="1">
    <citation type="journal article" date="1999" name="Nature">
        <title>Evidence for lateral gene transfer between Archaea and Bacteria from genome sequence of Thermotoga maritima.</title>
        <authorList>
            <person name="Nelson K.E."/>
            <person name="Clayton R.A."/>
            <person name="Gill S.R."/>
            <person name="Gwinn M.L."/>
            <person name="Dodson R.J."/>
            <person name="Haft D.H."/>
            <person name="Hickey E.K."/>
            <person name="Peterson J.D."/>
            <person name="Nelson W.C."/>
            <person name="Ketchum K.A."/>
            <person name="McDonald L.A."/>
            <person name="Utterback T.R."/>
            <person name="Malek J.A."/>
            <person name="Linher K.D."/>
            <person name="Garrett M.M."/>
            <person name="Stewart A.M."/>
            <person name="Cotton M.D."/>
            <person name="Pratt M.S."/>
            <person name="Phillips C.A."/>
            <person name="Richardson D.L."/>
            <person name="Heidelberg J.F."/>
            <person name="Sutton G.G."/>
            <person name="Fleischmann R.D."/>
            <person name="Eisen J.A."/>
            <person name="White O."/>
            <person name="Salzberg S.L."/>
            <person name="Smith H.O."/>
            <person name="Venter J.C."/>
            <person name="Fraser C.M."/>
        </authorList>
    </citation>
    <scope>NUCLEOTIDE SEQUENCE [LARGE SCALE GENOMIC DNA]</scope>
    <source>
        <strain>ATCC 43589 / DSM 3109 / JCM 10099 / NBRC 100826 / MSB8</strain>
    </source>
</reference>
<comment type="function">
    <text evidence="1">Located on the platform of the 30S subunit, it bridges several disparate RNA helices of the 16S rRNA. Forms part of the Shine-Dalgarno cleft in the 70S ribosome.</text>
</comment>
<comment type="subunit">
    <text evidence="1">Part of the 30S ribosomal subunit. Interacts with proteins S7 and S18. Binds to IF-3.</text>
</comment>
<comment type="similarity">
    <text evidence="1">Belongs to the universal ribosomal protein uS11 family.</text>
</comment>
<organism>
    <name type="scientific">Thermotoga maritima (strain ATCC 43589 / DSM 3109 / JCM 10099 / NBRC 100826 / MSB8)</name>
    <dbReference type="NCBI Taxonomy" id="243274"/>
    <lineage>
        <taxon>Bacteria</taxon>
        <taxon>Thermotogati</taxon>
        <taxon>Thermotogota</taxon>
        <taxon>Thermotogae</taxon>
        <taxon>Thermotogales</taxon>
        <taxon>Thermotogaceae</taxon>
        <taxon>Thermotoga</taxon>
    </lineage>
</organism>
<evidence type="ECO:0000255" key="1">
    <source>
        <dbReference type="HAMAP-Rule" id="MF_01310"/>
    </source>
</evidence>
<evidence type="ECO:0000305" key="2"/>
<keyword id="KW-1185">Reference proteome</keyword>
<keyword id="KW-0687">Ribonucleoprotein</keyword>
<keyword id="KW-0689">Ribosomal protein</keyword>
<keyword id="KW-0694">RNA-binding</keyword>
<keyword id="KW-0699">rRNA-binding</keyword>
<proteinExistence type="inferred from homology"/>
<protein>
    <recommendedName>
        <fullName evidence="1">Small ribosomal subunit protein uS11</fullName>
    </recommendedName>
    <alternativeName>
        <fullName evidence="2">30S ribosomal protein S11</fullName>
    </alternativeName>
</protein>
<sequence length="130" mass="14092">MARKRGGSSKKQKKVSFDYGVVHIKSTFNNTIITLTDKDGNTLTWASGGTVGFEGTRKGTPYAAQLAADKVAREALRMGIKKVDVLVKGPGPGREPAIRTLQGAGLEINQIKDVTPIPFNGCRPKKRRRV</sequence>
<gene>
    <name evidence="1" type="primary">rpsK</name>
    <name type="ordered locus">TM_1474</name>
</gene>
<name>RS11_THEMA</name>
<accession>Q9X1I4</accession>
<dbReference type="EMBL" id="AE000512">
    <property type="protein sequence ID" value="AAD36542.1"/>
    <property type="molecule type" value="Genomic_DNA"/>
</dbReference>
<dbReference type="PIR" id="C72247">
    <property type="entry name" value="C72247"/>
</dbReference>
<dbReference type="RefSeq" id="NP_229274.1">
    <property type="nucleotide sequence ID" value="NC_000853.1"/>
</dbReference>
<dbReference type="RefSeq" id="WP_004081783.1">
    <property type="nucleotide sequence ID" value="NC_000853.1"/>
</dbReference>
<dbReference type="SMR" id="Q9X1I4"/>
<dbReference type="FunCoup" id="Q9X1I4">
    <property type="interactions" value="388"/>
</dbReference>
<dbReference type="STRING" id="243274.TM_1474"/>
<dbReference type="PaxDb" id="243274-THEMA_06930"/>
<dbReference type="EnsemblBacteria" id="AAD36542">
    <property type="protein sequence ID" value="AAD36542"/>
    <property type="gene ID" value="TM_1474"/>
</dbReference>
<dbReference type="KEGG" id="tma:TM1474"/>
<dbReference type="KEGG" id="tmi:THEMA_06930"/>
<dbReference type="KEGG" id="tmm:Tmari_1482"/>
<dbReference type="KEGG" id="tmw:THMA_1506"/>
<dbReference type="eggNOG" id="COG0100">
    <property type="taxonomic scope" value="Bacteria"/>
</dbReference>
<dbReference type="InParanoid" id="Q9X1I4"/>
<dbReference type="OrthoDB" id="9806415at2"/>
<dbReference type="Proteomes" id="UP000008183">
    <property type="component" value="Chromosome"/>
</dbReference>
<dbReference type="GO" id="GO:0022627">
    <property type="term" value="C:cytosolic small ribosomal subunit"/>
    <property type="evidence" value="ECO:0000318"/>
    <property type="project" value="GO_Central"/>
</dbReference>
<dbReference type="GO" id="GO:0019843">
    <property type="term" value="F:rRNA binding"/>
    <property type="evidence" value="ECO:0007669"/>
    <property type="project" value="UniProtKB-UniRule"/>
</dbReference>
<dbReference type="GO" id="GO:0003735">
    <property type="term" value="F:structural constituent of ribosome"/>
    <property type="evidence" value="ECO:0000318"/>
    <property type="project" value="GO_Central"/>
</dbReference>
<dbReference type="GO" id="GO:0006412">
    <property type="term" value="P:translation"/>
    <property type="evidence" value="ECO:0000318"/>
    <property type="project" value="GO_Central"/>
</dbReference>
<dbReference type="FunFam" id="3.30.420.80:FF:000001">
    <property type="entry name" value="30S ribosomal protein S11"/>
    <property type="match status" value="1"/>
</dbReference>
<dbReference type="Gene3D" id="3.30.420.80">
    <property type="entry name" value="Ribosomal protein S11"/>
    <property type="match status" value="1"/>
</dbReference>
<dbReference type="HAMAP" id="MF_01310">
    <property type="entry name" value="Ribosomal_uS11"/>
    <property type="match status" value="1"/>
</dbReference>
<dbReference type="InterPro" id="IPR001971">
    <property type="entry name" value="Ribosomal_uS11"/>
</dbReference>
<dbReference type="InterPro" id="IPR019981">
    <property type="entry name" value="Ribosomal_uS11_bac-type"/>
</dbReference>
<dbReference type="InterPro" id="IPR018102">
    <property type="entry name" value="Ribosomal_uS11_CS"/>
</dbReference>
<dbReference type="InterPro" id="IPR036967">
    <property type="entry name" value="Ribosomal_uS11_sf"/>
</dbReference>
<dbReference type="NCBIfam" id="NF003698">
    <property type="entry name" value="PRK05309.1"/>
    <property type="match status" value="1"/>
</dbReference>
<dbReference type="NCBIfam" id="TIGR03632">
    <property type="entry name" value="uS11_bact"/>
    <property type="match status" value="1"/>
</dbReference>
<dbReference type="PANTHER" id="PTHR11759">
    <property type="entry name" value="40S RIBOSOMAL PROTEIN S14/30S RIBOSOMAL PROTEIN S11"/>
    <property type="match status" value="1"/>
</dbReference>
<dbReference type="Pfam" id="PF00411">
    <property type="entry name" value="Ribosomal_S11"/>
    <property type="match status" value="1"/>
</dbReference>
<dbReference type="PIRSF" id="PIRSF002131">
    <property type="entry name" value="Ribosomal_S11"/>
    <property type="match status" value="1"/>
</dbReference>
<dbReference type="SUPFAM" id="SSF53137">
    <property type="entry name" value="Translational machinery components"/>
    <property type="match status" value="1"/>
</dbReference>
<dbReference type="PROSITE" id="PS00054">
    <property type="entry name" value="RIBOSOMAL_S11"/>
    <property type="match status" value="1"/>
</dbReference>
<feature type="chain" id="PRO_0000123244" description="Small ribosomal subunit protein uS11">
    <location>
        <begin position="1"/>
        <end position="130"/>
    </location>
</feature>